<name>COPP_THEVO</name>
<sequence length="328" mass="37665">MITVVGGTFSKLHKGHKALLEKAIETGNEIVIGLTSDEYVKRNKVYPAIPYKERYRNLYNYMVKKTNKFRIRPIDDRNGNAPYERDYEIIVVSPETYQRSLKINEIRIQNGLPPLKIIRVPYVLAEDLFPISSTRIINGEIDGNGRRLKPVKVAIATNNSAKLKATNDFFHKLMKNFDVIQNTDYKLETQQPFGEVTMNMATKRAMQSLGDNDYAIGIESGIVYERFSRKYFDFHYCVVIDRFGNVTRGSSSGFEVPDRIIDLIKRDMSFSQAYGKVIDTNGIDDSTGIVGKISNGRVRRYDLIMECIRNAFIPRFDPDFYDTTYTPP</sequence>
<keyword id="KW-0067">ATP-binding</keyword>
<keyword id="KW-0173">Coenzyme A biosynthesis</keyword>
<keyword id="KW-0963">Cytoplasm</keyword>
<keyword id="KW-0378">Hydrolase</keyword>
<keyword id="KW-0460">Magnesium</keyword>
<keyword id="KW-0464">Manganese</keyword>
<keyword id="KW-0479">Metal-binding</keyword>
<keyword id="KW-0511">Multifunctional enzyme</keyword>
<keyword id="KW-0546">Nucleotide metabolism</keyword>
<keyword id="KW-0547">Nucleotide-binding</keyword>
<keyword id="KW-0548">Nucleotidyltransferase</keyword>
<keyword id="KW-0808">Transferase</keyword>
<organism>
    <name type="scientific">Thermoplasma volcanium (strain ATCC 51530 / DSM 4299 / JCM 9571 / NBRC 15438 / GSS1)</name>
    <dbReference type="NCBI Taxonomy" id="273116"/>
    <lineage>
        <taxon>Archaea</taxon>
        <taxon>Methanobacteriati</taxon>
        <taxon>Thermoplasmatota</taxon>
        <taxon>Thermoplasmata</taxon>
        <taxon>Thermoplasmatales</taxon>
        <taxon>Thermoplasmataceae</taxon>
        <taxon>Thermoplasma</taxon>
    </lineage>
</organism>
<feature type="chain" id="PRO_0000156330" description="Bifunctional phosphopantetheine adenylyltransferase/NTP phosphatase">
    <location>
        <begin position="1"/>
        <end position="328"/>
    </location>
</feature>
<feature type="region of interest" description="Phosphopantetheine adenylyltransferase">
    <location>
        <begin position="1"/>
        <end position="152"/>
    </location>
</feature>
<feature type="region of interest" description="Inosine/xanthosine triphosphatase">
    <location>
        <begin position="153"/>
        <end position="328"/>
    </location>
</feature>
<comment type="function">
    <text evidence="1">Reversibly transfers an adenylyl group from ATP to 4'-phosphopantetheine, yielding dephospho-CoA (dPCoA) and pyrophosphate.</text>
</comment>
<comment type="function">
    <text evidence="2">Phosphatase that hydrolyzes non-canonical purine nucleotides such as XTP and ITP to their respective diphosphate derivatives. Probably excludes non-canonical purines from DNA/RNA precursor pool, thus preventing their incorporation into DNA/RNA and avoiding chromosomal lesions.</text>
</comment>
<comment type="catalytic activity">
    <reaction>
        <text>(R)-4'-phosphopantetheine + ATP + H(+) = 3'-dephospho-CoA + diphosphate</text>
        <dbReference type="Rhea" id="RHEA:19801"/>
        <dbReference type="ChEBI" id="CHEBI:15378"/>
        <dbReference type="ChEBI" id="CHEBI:30616"/>
        <dbReference type="ChEBI" id="CHEBI:33019"/>
        <dbReference type="ChEBI" id="CHEBI:57328"/>
        <dbReference type="ChEBI" id="CHEBI:61723"/>
        <dbReference type="EC" id="2.7.7.3"/>
    </reaction>
</comment>
<comment type="catalytic activity">
    <reaction evidence="2">
        <text>XTP + H2O = XDP + phosphate + H(+)</text>
        <dbReference type="Rhea" id="RHEA:28406"/>
        <dbReference type="ChEBI" id="CHEBI:15377"/>
        <dbReference type="ChEBI" id="CHEBI:15378"/>
        <dbReference type="ChEBI" id="CHEBI:43474"/>
        <dbReference type="ChEBI" id="CHEBI:59884"/>
        <dbReference type="ChEBI" id="CHEBI:61314"/>
        <dbReference type="EC" id="3.6.1.73"/>
    </reaction>
</comment>
<comment type="catalytic activity">
    <reaction evidence="2">
        <text>ITP + H2O = IDP + phosphate + H(+)</text>
        <dbReference type="Rhea" id="RHEA:28330"/>
        <dbReference type="ChEBI" id="CHEBI:15377"/>
        <dbReference type="ChEBI" id="CHEBI:15378"/>
        <dbReference type="ChEBI" id="CHEBI:43474"/>
        <dbReference type="ChEBI" id="CHEBI:58280"/>
        <dbReference type="ChEBI" id="CHEBI:61402"/>
        <dbReference type="EC" id="3.6.1.73"/>
    </reaction>
</comment>
<comment type="cofactor">
    <cofactor evidence="2">
        <name>Mg(2+)</name>
        <dbReference type="ChEBI" id="CHEBI:18420"/>
    </cofactor>
    <cofactor evidence="2">
        <name>Mn(2+)</name>
        <dbReference type="ChEBI" id="CHEBI:29035"/>
    </cofactor>
    <text evidence="2">Binds 1 divalent metal cation per subunit; can use either Mg(2+) or Mn(2+).</text>
</comment>
<comment type="pathway">
    <text>Cofactor biosynthesis; coenzyme A biosynthesis.</text>
</comment>
<comment type="subcellular location">
    <subcellularLocation>
        <location evidence="1">Cytoplasm</location>
    </subcellularLocation>
</comment>
<comment type="similarity">
    <text evidence="3">In the N-terminal section; belongs to the eukaryotic CoaD family.</text>
</comment>
<comment type="similarity">
    <text evidence="3">In the C-terminal section; belongs to the YjjX NTPase family.</text>
</comment>
<protein>
    <recommendedName>
        <fullName>Bifunctional phosphopantetheine adenylyltransferase/NTP phosphatase</fullName>
    </recommendedName>
    <domain>
        <recommendedName>
            <fullName>Phosphopantetheine adenylyltransferase</fullName>
            <ecNumber>2.7.7.3</ecNumber>
        </recommendedName>
        <alternativeName>
            <fullName>Dephospho-CoA pyrophosphorylase</fullName>
        </alternativeName>
        <alternativeName>
            <fullName>Pantetheine-phosphate adenylyltransferase</fullName>
            <shortName>PPAT</shortName>
        </alternativeName>
    </domain>
    <domain>
        <recommendedName>
            <fullName evidence="2">Probable inosine/xanthosine triphosphatase</fullName>
            <ecNumber evidence="2">3.6.1.73</ecNumber>
        </recommendedName>
        <alternativeName>
            <fullName evidence="2">Non-canonical purine NTP phosphatase</fullName>
        </alternativeName>
        <alternativeName>
            <fullName evidence="2">Nucleoside-triphosphate phosphatase</fullName>
            <shortName evidence="2">NTPase</shortName>
        </alternativeName>
    </domain>
</protein>
<proteinExistence type="inferred from homology"/>
<reference key="1">
    <citation type="journal article" date="2000" name="Proc. Natl. Acad. Sci. U.S.A.">
        <title>Archaeal adaptation to higher temperatures revealed by genomic sequence of Thermoplasma volcanium.</title>
        <authorList>
            <person name="Kawashima T."/>
            <person name="Amano N."/>
            <person name="Koike H."/>
            <person name="Makino S."/>
            <person name="Higuchi S."/>
            <person name="Kawashima-Ohya Y."/>
            <person name="Watanabe K."/>
            <person name="Yamazaki M."/>
            <person name="Kanehori K."/>
            <person name="Kawamoto T."/>
            <person name="Nunoshiba T."/>
            <person name="Yamamoto Y."/>
            <person name="Aramaki H."/>
            <person name="Makino K."/>
            <person name="Suzuki M."/>
        </authorList>
    </citation>
    <scope>NUCLEOTIDE SEQUENCE [LARGE SCALE GENOMIC DNA]</scope>
    <source>
        <strain>ATCC 51530 / DSM 4299 / JCM 9571 / NBRC 15438 / GSS1</strain>
    </source>
</reference>
<evidence type="ECO:0000250" key="1"/>
<evidence type="ECO:0000250" key="2">
    <source>
        <dbReference type="UniProtKB" id="P39411"/>
    </source>
</evidence>
<evidence type="ECO:0000305" key="3"/>
<accession>Q97BQ0</accession>
<dbReference type="EC" id="2.7.7.3"/>
<dbReference type="EC" id="3.6.1.73" evidence="2"/>
<dbReference type="EMBL" id="BA000011">
    <property type="protein sequence ID" value="BAB59547.1"/>
    <property type="molecule type" value="Genomic_DNA"/>
</dbReference>
<dbReference type="RefSeq" id="WP_010916661.1">
    <property type="nucleotide sequence ID" value="NC_002689.2"/>
</dbReference>
<dbReference type="SMR" id="Q97BQ0"/>
<dbReference type="STRING" id="273116.gene:9381183"/>
<dbReference type="PaxDb" id="273116-14324620"/>
<dbReference type="DNASU" id="1440919"/>
<dbReference type="GeneID" id="1440919"/>
<dbReference type="KEGG" id="tvo:TVG0394586"/>
<dbReference type="eggNOG" id="arCOG01221">
    <property type="taxonomic scope" value="Archaea"/>
</dbReference>
<dbReference type="HOGENOM" id="CLU_887399_0_0_2"/>
<dbReference type="OrthoDB" id="53228at2157"/>
<dbReference type="PhylomeDB" id="Q97BQ0"/>
<dbReference type="UniPathway" id="UPA00241"/>
<dbReference type="Proteomes" id="UP000001017">
    <property type="component" value="Chromosome"/>
</dbReference>
<dbReference type="GO" id="GO:0005737">
    <property type="term" value="C:cytoplasm"/>
    <property type="evidence" value="ECO:0007669"/>
    <property type="project" value="UniProtKB-SubCell"/>
</dbReference>
<dbReference type="GO" id="GO:0005524">
    <property type="term" value="F:ATP binding"/>
    <property type="evidence" value="ECO:0007669"/>
    <property type="project" value="UniProtKB-KW"/>
</dbReference>
<dbReference type="GO" id="GO:0103023">
    <property type="term" value="F:ITPase activity"/>
    <property type="evidence" value="ECO:0007669"/>
    <property type="project" value="UniProtKB-EC"/>
</dbReference>
<dbReference type="GO" id="GO:0046872">
    <property type="term" value="F:metal ion binding"/>
    <property type="evidence" value="ECO:0007669"/>
    <property type="project" value="UniProtKB-KW"/>
</dbReference>
<dbReference type="GO" id="GO:0004595">
    <property type="term" value="F:pantetheine-phosphate adenylyltransferase activity"/>
    <property type="evidence" value="ECO:0007669"/>
    <property type="project" value="UniProtKB-UniRule"/>
</dbReference>
<dbReference type="GO" id="GO:0017111">
    <property type="term" value="F:ribonucleoside triphosphate phosphatase activity"/>
    <property type="evidence" value="ECO:0000250"/>
    <property type="project" value="UniProtKB"/>
</dbReference>
<dbReference type="GO" id="GO:0015937">
    <property type="term" value="P:coenzyme A biosynthetic process"/>
    <property type="evidence" value="ECO:0007669"/>
    <property type="project" value="UniProtKB-UniRule"/>
</dbReference>
<dbReference type="GO" id="GO:0009117">
    <property type="term" value="P:nucleotide metabolic process"/>
    <property type="evidence" value="ECO:0007669"/>
    <property type="project" value="UniProtKB-KW"/>
</dbReference>
<dbReference type="GO" id="GO:0006772">
    <property type="term" value="P:thiamine metabolic process"/>
    <property type="evidence" value="ECO:0007669"/>
    <property type="project" value="TreeGrafter"/>
</dbReference>
<dbReference type="CDD" id="cd02164">
    <property type="entry name" value="PPAT_CoAS"/>
    <property type="match status" value="1"/>
</dbReference>
<dbReference type="FunFam" id="3.90.950.10:FF:000030">
    <property type="entry name" value="Bifunctional phosphopantetheine adenylyltransferase/NTP phosphatase"/>
    <property type="match status" value="1"/>
</dbReference>
<dbReference type="FunFam" id="3.40.50.620:FF:000376">
    <property type="entry name" value="Phosphopantetheine adenylyltransferase"/>
    <property type="match status" value="1"/>
</dbReference>
<dbReference type="Gene3D" id="3.90.950.10">
    <property type="match status" value="1"/>
</dbReference>
<dbReference type="Gene3D" id="3.40.50.620">
    <property type="entry name" value="HUPs"/>
    <property type="match status" value="1"/>
</dbReference>
<dbReference type="HAMAP" id="MF_00648">
    <property type="entry name" value="Non_canon_purine_NTPase_YjjX"/>
    <property type="match status" value="1"/>
</dbReference>
<dbReference type="HAMAP" id="MF_00647">
    <property type="entry name" value="PPAT_arch"/>
    <property type="match status" value="1"/>
</dbReference>
<dbReference type="InterPro" id="IPR004821">
    <property type="entry name" value="Cyt_trans-like"/>
</dbReference>
<dbReference type="InterPro" id="IPR029001">
    <property type="entry name" value="ITPase-like_fam"/>
</dbReference>
<dbReference type="InterPro" id="IPR002786">
    <property type="entry name" value="Non_canon_purine_NTPase"/>
</dbReference>
<dbReference type="InterPro" id="IPR026533">
    <property type="entry name" value="NTPase/PRRC1"/>
</dbReference>
<dbReference type="InterPro" id="IPR023540">
    <property type="entry name" value="PPAT_arch"/>
</dbReference>
<dbReference type="InterPro" id="IPR014729">
    <property type="entry name" value="Rossmann-like_a/b/a_fold"/>
</dbReference>
<dbReference type="InterPro" id="IPR050299">
    <property type="entry name" value="YjjX_NTPase"/>
</dbReference>
<dbReference type="NCBIfam" id="TIGR00125">
    <property type="entry name" value="cyt_tran_rel"/>
    <property type="match status" value="1"/>
</dbReference>
<dbReference type="NCBIfam" id="NF001985">
    <property type="entry name" value="PRK00777.1"/>
    <property type="match status" value="1"/>
</dbReference>
<dbReference type="NCBIfam" id="NF002250">
    <property type="entry name" value="PRK01170.1"/>
    <property type="match status" value="1"/>
</dbReference>
<dbReference type="PANTHER" id="PTHR34699">
    <property type="match status" value="1"/>
</dbReference>
<dbReference type="PANTHER" id="PTHR34699:SF2">
    <property type="entry name" value="NON-CANONICAL PURINE NTP PHOSPHATASE_PRRC1 DOMAIN-CONTAINING PROTEIN"/>
    <property type="match status" value="1"/>
</dbReference>
<dbReference type="Pfam" id="PF01467">
    <property type="entry name" value="CTP_transf_like"/>
    <property type="match status" value="1"/>
</dbReference>
<dbReference type="Pfam" id="PF01931">
    <property type="entry name" value="NTPase_I-T"/>
    <property type="match status" value="1"/>
</dbReference>
<dbReference type="SUPFAM" id="SSF52972">
    <property type="entry name" value="ITPase-like"/>
    <property type="match status" value="1"/>
</dbReference>
<dbReference type="SUPFAM" id="SSF52374">
    <property type="entry name" value="Nucleotidylyl transferase"/>
    <property type="match status" value="1"/>
</dbReference>
<gene>
    <name type="primary">coaD</name>
    <name type="ordered locus">TV0405</name>
    <name type="ORF">TVG0394586</name>
</gene>